<protein>
    <recommendedName>
        <fullName>Protamine-1</fullName>
        <shortName>P1</shortName>
    </recommendedName>
</protein>
<name>PRT1_BUFJA</name>
<evidence type="ECO:0000256" key="1">
    <source>
        <dbReference type="SAM" id="MobiDB-lite"/>
    </source>
</evidence>
<evidence type="ECO:0000269" key="2">
    <source>
    </source>
</evidence>
<proteinExistence type="evidence at protein level"/>
<organism>
    <name type="scientific">Bufo japonicus</name>
    <name type="common">Japanese common toad</name>
    <name type="synonym">Bufo praetextatus</name>
    <dbReference type="NCBI Taxonomy" id="8387"/>
    <lineage>
        <taxon>Eukaryota</taxon>
        <taxon>Metazoa</taxon>
        <taxon>Chordata</taxon>
        <taxon>Craniata</taxon>
        <taxon>Vertebrata</taxon>
        <taxon>Euteleostomi</taxon>
        <taxon>Amphibia</taxon>
        <taxon>Batrachia</taxon>
        <taxon>Anura</taxon>
        <taxon>Neobatrachia</taxon>
        <taxon>Hyloidea</taxon>
        <taxon>Bufonidae</taxon>
        <taxon>Bufo</taxon>
    </lineage>
</organism>
<accession>P24641</accession>
<gene>
    <name type="primary">PBP1</name>
</gene>
<comment type="function">
    <text>Protamines substitute for histones in the chromatin of sperm during the haploid phase of spermatogenesis. They compact sperm DNA into a highly condensed, stable and inactive complex.</text>
</comment>
<comment type="subcellular location">
    <subcellularLocation>
        <location>Nucleus</location>
    </subcellularLocation>
    <subcellularLocation>
        <location>Chromosome</location>
    </subcellularLocation>
</comment>
<comment type="tissue specificity">
    <text>Testis.</text>
</comment>
<feature type="initiator methionine" description="Removed" evidence="2">
    <location>
        <position position="1"/>
    </location>
</feature>
<feature type="peptide" id="PRO_0000044854" description="Protamine-1">
    <location>
        <begin position="2"/>
        <end position="40"/>
    </location>
</feature>
<feature type="region of interest" description="Disordered" evidence="1">
    <location>
        <begin position="1"/>
        <end position="40"/>
    </location>
</feature>
<reference key="1">
    <citation type="journal article" date="1991" name="Eur. J. Biochem.">
        <title>Primary structure of toad sperm protamines and nucleotide sequence of their cDNAs.</title>
        <authorList>
            <person name="Takamune K."/>
            <person name="Nishida H."/>
            <person name="Takai M."/>
            <person name="Katagiri C."/>
        </authorList>
    </citation>
    <scope>PROTEIN SEQUENCE OF 2-40</scope>
    <scope>NUCLEOTIDE SEQUENCE OF 7-40</scope>
    <source>
        <tissue>Testis</tissue>
    </source>
</reference>
<sequence>MPPRRKRVSSAPRRRRRTYRRTTAHKHQDRPVHRRRRRRH</sequence>
<dbReference type="EMBL" id="X56529">
    <property type="protein sequence ID" value="CAA39876.1"/>
    <property type="molecule type" value="mRNA"/>
</dbReference>
<dbReference type="PIR" id="S28546">
    <property type="entry name" value="S28546"/>
</dbReference>
<dbReference type="GO" id="GO:0000786">
    <property type="term" value="C:nucleosome"/>
    <property type="evidence" value="ECO:0007669"/>
    <property type="project" value="UniProtKB-KW"/>
</dbReference>
<dbReference type="GO" id="GO:0005634">
    <property type="term" value="C:nucleus"/>
    <property type="evidence" value="ECO:0007669"/>
    <property type="project" value="UniProtKB-SubCell"/>
</dbReference>
<dbReference type="GO" id="GO:0003677">
    <property type="term" value="F:DNA binding"/>
    <property type="evidence" value="ECO:0007669"/>
    <property type="project" value="UniProtKB-KW"/>
</dbReference>
<dbReference type="GO" id="GO:0030154">
    <property type="term" value="P:cell differentiation"/>
    <property type="evidence" value="ECO:0007669"/>
    <property type="project" value="UniProtKB-KW"/>
</dbReference>
<dbReference type="GO" id="GO:0030261">
    <property type="term" value="P:chromosome condensation"/>
    <property type="evidence" value="ECO:0007669"/>
    <property type="project" value="UniProtKB-KW"/>
</dbReference>
<dbReference type="GO" id="GO:0007283">
    <property type="term" value="P:spermatogenesis"/>
    <property type="evidence" value="ECO:0007669"/>
    <property type="project" value="UniProtKB-KW"/>
</dbReference>
<keyword id="KW-0158">Chromosome</keyword>
<keyword id="KW-0217">Developmental protein</keyword>
<keyword id="KW-0221">Differentiation</keyword>
<keyword id="KW-0903">Direct protein sequencing</keyword>
<keyword id="KW-0226">DNA condensation</keyword>
<keyword id="KW-0238">DNA-binding</keyword>
<keyword id="KW-0544">Nucleosome core</keyword>
<keyword id="KW-0539">Nucleus</keyword>
<keyword id="KW-0744">Spermatogenesis</keyword>